<protein>
    <recommendedName>
        <fullName evidence="1">Holo-[acyl-carrier-protein] synthase</fullName>
        <shortName evidence="1">Holo-ACP synthase</shortName>
        <ecNumber evidence="1">2.7.8.7</ecNumber>
    </recommendedName>
    <alternativeName>
        <fullName evidence="1">4'-phosphopantetheinyl transferase AcpS</fullName>
    </alternativeName>
</protein>
<sequence length="126" mass="14094">MAILGLGTDIVEIARIEAVIARSGERLARRVLSDNEWAIWKTHHQPVRFLAKRFAVKEAAAKAFGTGIRNGLAFNQFEVFNDELGKPRLRLWGEALKLAEKLGVVNMHVTLADERHYACATVIIES</sequence>
<name>ACPS_SHIFL</name>
<keyword id="KW-0963">Cytoplasm</keyword>
<keyword id="KW-0275">Fatty acid biosynthesis</keyword>
<keyword id="KW-0276">Fatty acid metabolism</keyword>
<keyword id="KW-0444">Lipid biosynthesis</keyword>
<keyword id="KW-0443">Lipid metabolism</keyword>
<keyword id="KW-0460">Magnesium</keyword>
<keyword id="KW-0479">Metal-binding</keyword>
<keyword id="KW-1185">Reference proteome</keyword>
<keyword id="KW-0808">Transferase</keyword>
<proteinExistence type="inferred from homology"/>
<dbReference type="EC" id="2.7.8.7" evidence="1"/>
<dbReference type="EMBL" id="AE005674">
    <property type="protein sequence ID" value="AAN44122.1"/>
    <property type="molecule type" value="Genomic_DNA"/>
</dbReference>
<dbReference type="EMBL" id="AE014073">
    <property type="protein sequence ID" value="AAP17946.1"/>
    <property type="molecule type" value="Genomic_DNA"/>
</dbReference>
<dbReference type="RefSeq" id="NP_708415.1">
    <property type="nucleotide sequence ID" value="NC_004337.2"/>
</dbReference>
<dbReference type="RefSeq" id="WP_000986029.1">
    <property type="nucleotide sequence ID" value="NZ_WPGW01000044.1"/>
</dbReference>
<dbReference type="SMR" id="Q83K24"/>
<dbReference type="STRING" id="198214.SF2625"/>
<dbReference type="PaxDb" id="198214-SF2625"/>
<dbReference type="GeneID" id="1026788"/>
<dbReference type="GeneID" id="93774528"/>
<dbReference type="KEGG" id="sfl:SF2625"/>
<dbReference type="KEGG" id="sfx:S2798"/>
<dbReference type="PATRIC" id="fig|198214.7.peg.3133"/>
<dbReference type="HOGENOM" id="CLU_089696_3_1_6"/>
<dbReference type="Proteomes" id="UP000001006">
    <property type="component" value="Chromosome"/>
</dbReference>
<dbReference type="Proteomes" id="UP000002673">
    <property type="component" value="Chromosome"/>
</dbReference>
<dbReference type="GO" id="GO:0005737">
    <property type="term" value="C:cytoplasm"/>
    <property type="evidence" value="ECO:0007669"/>
    <property type="project" value="UniProtKB-SubCell"/>
</dbReference>
<dbReference type="GO" id="GO:0008897">
    <property type="term" value="F:holo-[acyl-carrier-protein] synthase activity"/>
    <property type="evidence" value="ECO:0007669"/>
    <property type="project" value="UniProtKB-UniRule"/>
</dbReference>
<dbReference type="GO" id="GO:0000287">
    <property type="term" value="F:magnesium ion binding"/>
    <property type="evidence" value="ECO:0007669"/>
    <property type="project" value="UniProtKB-UniRule"/>
</dbReference>
<dbReference type="GO" id="GO:0006633">
    <property type="term" value="P:fatty acid biosynthetic process"/>
    <property type="evidence" value="ECO:0007669"/>
    <property type="project" value="UniProtKB-UniRule"/>
</dbReference>
<dbReference type="FunFam" id="3.90.470.20:FF:000001">
    <property type="entry name" value="Holo-[acyl-carrier-protein] synthase"/>
    <property type="match status" value="1"/>
</dbReference>
<dbReference type="Gene3D" id="3.90.470.20">
    <property type="entry name" value="4'-phosphopantetheinyl transferase domain"/>
    <property type="match status" value="1"/>
</dbReference>
<dbReference type="HAMAP" id="MF_00101">
    <property type="entry name" value="AcpS"/>
    <property type="match status" value="1"/>
</dbReference>
<dbReference type="InterPro" id="IPR008278">
    <property type="entry name" value="4-PPantetheinyl_Trfase_dom"/>
</dbReference>
<dbReference type="InterPro" id="IPR037143">
    <property type="entry name" value="4-PPantetheinyl_Trfase_dom_sf"/>
</dbReference>
<dbReference type="InterPro" id="IPR002582">
    <property type="entry name" value="ACPS"/>
</dbReference>
<dbReference type="InterPro" id="IPR004568">
    <property type="entry name" value="Ppantetheine-prot_Trfase_dom"/>
</dbReference>
<dbReference type="NCBIfam" id="TIGR00516">
    <property type="entry name" value="acpS"/>
    <property type="match status" value="1"/>
</dbReference>
<dbReference type="NCBIfam" id="TIGR00556">
    <property type="entry name" value="pantethn_trn"/>
    <property type="match status" value="1"/>
</dbReference>
<dbReference type="Pfam" id="PF01648">
    <property type="entry name" value="ACPS"/>
    <property type="match status" value="1"/>
</dbReference>
<dbReference type="SUPFAM" id="SSF56214">
    <property type="entry name" value="4'-phosphopantetheinyl transferase"/>
    <property type="match status" value="1"/>
</dbReference>
<gene>
    <name evidence="1" type="primary">acpS</name>
    <name type="ordered locus">SF2625</name>
    <name type="ordered locus">S2798</name>
</gene>
<comment type="function">
    <text evidence="1">Transfers the 4'-phosphopantetheine moiety from coenzyme A to a Ser of acyl-carrier-protein.</text>
</comment>
<comment type="catalytic activity">
    <reaction evidence="1">
        <text>apo-[ACP] + CoA = holo-[ACP] + adenosine 3',5'-bisphosphate + H(+)</text>
        <dbReference type="Rhea" id="RHEA:12068"/>
        <dbReference type="Rhea" id="RHEA-COMP:9685"/>
        <dbReference type="Rhea" id="RHEA-COMP:9690"/>
        <dbReference type="ChEBI" id="CHEBI:15378"/>
        <dbReference type="ChEBI" id="CHEBI:29999"/>
        <dbReference type="ChEBI" id="CHEBI:57287"/>
        <dbReference type="ChEBI" id="CHEBI:58343"/>
        <dbReference type="ChEBI" id="CHEBI:64479"/>
        <dbReference type="EC" id="2.7.8.7"/>
    </reaction>
</comment>
<comment type="cofactor">
    <cofactor evidence="1">
        <name>Mg(2+)</name>
        <dbReference type="ChEBI" id="CHEBI:18420"/>
    </cofactor>
</comment>
<comment type="subcellular location">
    <subcellularLocation>
        <location evidence="1">Cytoplasm</location>
    </subcellularLocation>
</comment>
<comment type="similarity">
    <text evidence="1">Belongs to the P-Pant transferase superfamily. AcpS family.</text>
</comment>
<evidence type="ECO:0000255" key="1">
    <source>
        <dbReference type="HAMAP-Rule" id="MF_00101"/>
    </source>
</evidence>
<feature type="chain" id="PRO_0000175698" description="Holo-[acyl-carrier-protein] synthase">
    <location>
        <begin position="1"/>
        <end position="126"/>
    </location>
</feature>
<feature type="binding site" evidence="1">
    <location>
        <position position="9"/>
    </location>
    <ligand>
        <name>Mg(2+)</name>
        <dbReference type="ChEBI" id="CHEBI:18420"/>
    </ligand>
</feature>
<feature type="binding site" evidence="1">
    <location>
        <position position="58"/>
    </location>
    <ligand>
        <name>Mg(2+)</name>
        <dbReference type="ChEBI" id="CHEBI:18420"/>
    </ligand>
</feature>
<reference key="1">
    <citation type="journal article" date="2002" name="Nucleic Acids Res.">
        <title>Genome sequence of Shigella flexneri 2a: insights into pathogenicity through comparison with genomes of Escherichia coli K12 and O157.</title>
        <authorList>
            <person name="Jin Q."/>
            <person name="Yuan Z."/>
            <person name="Xu J."/>
            <person name="Wang Y."/>
            <person name="Shen Y."/>
            <person name="Lu W."/>
            <person name="Wang J."/>
            <person name="Liu H."/>
            <person name="Yang J."/>
            <person name="Yang F."/>
            <person name="Zhang X."/>
            <person name="Zhang J."/>
            <person name="Yang G."/>
            <person name="Wu H."/>
            <person name="Qu D."/>
            <person name="Dong J."/>
            <person name="Sun L."/>
            <person name="Xue Y."/>
            <person name="Zhao A."/>
            <person name="Gao Y."/>
            <person name="Zhu J."/>
            <person name="Kan B."/>
            <person name="Ding K."/>
            <person name="Chen S."/>
            <person name="Cheng H."/>
            <person name="Yao Z."/>
            <person name="He B."/>
            <person name="Chen R."/>
            <person name="Ma D."/>
            <person name="Qiang B."/>
            <person name="Wen Y."/>
            <person name="Hou Y."/>
            <person name="Yu J."/>
        </authorList>
    </citation>
    <scope>NUCLEOTIDE SEQUENCE [LARGE SCALE GENOMIC DNA]</scope>
    <source>
        <strain>301 / Serotype 2a</strain>
    </source>
</reference>
<reference key="2">
    <citation type="journal article" date="2003" name="Infect. Immun.">
        <title>Complete genome sequence and comparative genomics of Shigella flexneri serotype 2a strain 2457T.</title>
        <authorList>
            <person name="Wei J."/>
            <person name="Goldberg M.B."/>
            <person name="Burland V."/>
            <person name="Venkatesan M.M."/>
            <person name="Deng W."/>
            <person name="Fournier G."/>
            <person name="Mayhew G.F."/>
            <person name="Plunkett G. III"/>
            <person name="Rose D.J."/>
            <person name="Darling A."/>
            <person name="Mau B."/>
            <person name="Perna N.T."/>
            <person name="Payne S.M."/>
            <person name="Runyen-Janecky L.J."/>
            <person name="Zhou S."/>
            <person name="Schwartz D.C."/>
            <person name="Blattner F.R."/>
        </authorList>
    </citation>
    <scope>NUCLEOTIDE SEQUENCE [LARGE SCALE GENOMIC DNA]</scope>
    <source>
        <strain>ATCC 700930 / 2457T / Serotype 2a</strain>
    </source>
</reference>
<organism>
    <name type="scientific">Shigella flexneri</name>
    <dbReference type="NCBI Taxonomy" id="623"/>
    <lineage>
        <taxon>Bacteria</taxon>
        <taxon>Pseudomonadati</taxon>
        <taxon>Pseudomonadota</taxon>
        <taxon>Gammaproteobacteria</taxon>
        <taxon>Enterobacterales</taxon>
        <taxon>Enterobacteriaceae</taxon>
        <taxon>Shigella</taxon>
    </lineage>
</organism>
<accession>Q83K24</accession>
<accession>Q7C0E7</accession>